<comment type="function">
    <text>Might be involved in plasmid transfer.</text>
</comment>
<comment type="similarity">
    <text evidence="2">Belongs to the MobA/MobL family.</text>
</comment>
<reference key="1">
    <citation type="journal article" date="2002" name="Proc. Natl. Acad. Sci. U.S.A.">
        <title>The genome sequence of Bifidobacterium longum reflects its adaptation to the human gastrointestinal tract.</title>
        <authorList>
            <person name="Schell M.A."/>
            <person name="Karmirantzou M."/>
            <person name="Snel B."/>
            <person name="Vilanova D."/>
            <person name="Berger B."/>
            <person name="Pessi G."/>
            <person name="Zwahlen M.-C."/>
            <person name="Desiere F."/>
            <person name="Bork P."/>
            <person name="Delley M."/>
            <person name="Pridmore R.D."/>
            <person name="Arigoni F."/>
        </authorList>
    </citation>
    <scope>NUCLEOTIDE SEQUENCE [LARGE SCALE GENOMIC DNA]</scope>
    <source>
        <strain>NCC 2705</strain>
    </source>
</reference>
<dbReference type="EMBL" id="AF540971">
    <property type="protein sequence ID" value="AAN31778.1"/>
    <property type="molecule type" value="Genomic_DNA"/>
</dbReference>
<dbReference type="RefSeq" id="NP_862283.1">
    <property type="nucleotide sequence ID" value="NC_004943.1"/>
</dbReference>
<dbReference type="RefSeq" id="WP_011117010.1">
    <property type="nucleotide sequence ID" value="NC_004943.1"/>
</dbReference>
<dbReference type="SMR" id="Q8GN32"/>
<dbReference type="EnsemblBacteria" id="AAN31778">
    <property type="protein sequence ID" value="AAN31778"/>
    <property type="gene ID" value="AAN31778"/>
</dbReference>
<dbReference type="KEGG" id="blo:mobA"/>
<dbReference type="PATRIC" id="fig|206672.9.peg.1869"/>
<dbReference type="HOGENOM" id="CLU_038453_0_0_11"/>
<dbReference type="OrthoDB" id="1826980at2"/>
<dbReference type="Proteomes" id="UP000000439">
    <property type="component" value="Plasmid pBLO1"/>
</dbReference>
<dbReference type="Gene3D" id="3.30.930.30">
    <property type="match status" value="1"/>
</dbReference>
<dbReference type="InterPro" id="IPR005053">
    <property type="entry name" value="MobA_MobL"/>
</dbReference>
<dbReference type="Pfam" id="PF03389">
    <property type="entry name" value="MobA_MobL"/>
    <property type="match status" value="1"/>
</dbReference>
<geneLocation type="plasmid">
    <name>pBLO1</name>
</geneLocation>
<sequence length="565" mass="64294">MAIYHLSVSNVSRASGSRATATLSYITGKRVHDERRGETYDYGRKERVLRVGTLLPEGAPAEFADPAVLFNAVELHETGRTARPAKKIVVALPREFTPRQRVQALEGYIRENLNADGYAATYAIHDDGQGNNPHAHILVANRQIDPKTGGWAKLKQRMEYVLDERGERVPLIDPKTGAQKLDKRGRRQWKRTSVSLNPLDRKAKLQSLRESWAKTCNARLDETARIDHRSLEDQGSDLEPTIHEGYAARAIERAGGVSERCQTNREIRRSNDLLTAIRHELGRIFDRLGELFAAKIGQLRQRQARPEAAREPNWRYFEGDARRQLEADRADHAAALRGRLMDARADVRNRETWWKNHGTEEFEAAKQIIDVACEASREARDAGMFQRGRLRRNAEQVAGEQSERLRGAVPWLEDTEIPADWDQANRFRMRTTKAIHDHDMQPRTGLVAELERQLEQAEQAAGERPSPEQVKDLALRMAEQRERAEGQARGANRPEPSGDEPLDLSEPEDWGESSPFEQRATPKTKADLLGELKQRADRRTGRQEAEQRQIDPWSAQPPQRRGHGR</sequence>
<protein>
    <recommendedName>
        <fullName>Probable mobilization protein MobA</fullName>
    </recommendedName>
</protein>
<name>MOBA_BIFLO</name>
<gene>
    <name type="primary">mobA</name>
    <name type="ordered locus">BL1822</name>
</gene>
<accession>Q8GN32</accession>
<evidence type="ECO:0000256" key="1">
    <source>
        <dbReference type="SAM" id="MobiDB-lite"/>
    </source>
</evidence>
<evidence type="ECO:0000305" key="2"/>
<keyword id="KW-0184">Conjugation</keyword>
<keyword id="KW-0499">Mobility protein</keyword>
<keyword id="KW-0614">Plasmid</keyword>
<keyword id="KW-1185">Reference proteome</keyword>
<feature type="chain" id="PRO_0000210851" description="Probable mobilization protein MobA">
    <location>
        <begin position="1"/>
        <end position="565"/>
    </location>
</feature>
<feature type="region of interest" description="Disordered" evidence="1">
    <location>
        <begin position="479"/>
        <end position="565"/>
    </location>
</feature>
<feature type="compositionally biased region" description="Acidic residues" evidence="1">
    <location>
        <begin position="497"/>
        <end position="511"/>
    </location>
</feature>
<feature type="compositionally biased region" description="Basic and acidic residues" evidence="1">
    <location>
        <begin position="524"/>
        <end position="549"/>
    </location>
</feature>
<proteinExistence type="inferred from homology"/>
<organism>
    <name type="scientific">Bifidobacterium longum (strain NCC 2705)</name>
    <dbReference type="NCBI Taxonomy" id="206672"/>
    <lineage>
        <taxon>Bacteria</taxon>
        <taxon>Bacillati</taxon>
        <taxon>Actinomycetota</taxon>
        <taxon>Actinomycetes</taxon>
        <taxon>Bifidobacteriales</taxon>
        <taxon>Bifidobacteriaceae</taxon>
        <taxon>Bifidobacterium</taxon>
    </lineage>
</organism>